<organism>
    <name type="scientific">Rattus norvegicus</name>
    <name type="common">Rat</name>
    <dbReference type="NCBI Taxonomy" id="10116"/>
    <lineage>
        <taxon>Eukaryota</taxon>
        <taxon>Metazoa</taxon>
        <taxon>Chordata</taxon>
        <taxon>Craniata</taxon>
        <taxon>Vertebrata</taxon>
        <taxon>Euteleostomi</taxon>
        <taxon>Mammalia</taxon>
        <taxon>Eutheria</taxon>
        <taxon>Euarchontoglires</taxon>
        <taxon>Glires</taxon>
        <taxon>Rodentia</taxon>
        <taxon>Myomorpha</taxon>
        <taxon>Muroidea</taxon>
        <taxon>Muridae</taxon>
        <taxon>Murinae</taxon>
        <taxon>Rattus</taxon>
    </lineage>
</organism>
<name>CLBA1_RAT</name>
<evidence type="ECO:0000256" key="1">
    <source>
        <dbReference type="SAM" id="MobiDB-lite"/>
    </source>
</evidence>
<evidence type="ECO:0000305" key="2"/>
<evidence type="ECO:0000312" key="3">
    <source>
        <dbReference type="RGD" id="1307315"/>
    </source>
</evidence>
<protein>
    <recommendedName>
        <fullName evidence="2">Uncharacterized protein CLBA1</fullName>
    </recommendedName>
    <alternativeName>
        <fullName>Clathrin-binding box of aftiphilin-containing protein 1</fullName>
    </alternativeName>
</protein>
<reference key="1">
    <citation type="journal article" date="2004" name="Genome Res.">
        <title>The status, quality, and expansion of the NIH full-length cDNA project: the Mammalian Gene Collection (MGC).</title>
        <authorList>
            <consortium name="The MGC Project Team"/>
        </authorList>
    </citation>
    <scope>NUCLEOTIDE SEQUENCE [LARGE SCALE MRNA]</scope>
    <source>
        <tissue>Ovary</tissue>
    </source>
</reference>
<keyword id="KW-1185">Reference proteome</keyword>
<dbReference type="EMBL" id="BC086564">
    <property type="protein sequence ID" value="AAH86564.1"/>
    <property type="molecule type" value="mRNA"/>
</dbReference>
<dbReference type="RefSeq" id="NP_001008378.1">
    <property type="nucleotide sequence ID" value="NM_001008377.1"/>
</dbReference>
<dbReference type="FunCoup" id="Q5RJN9">
    <property type="interactions" value="113"/>
</dbReference>
<dbReference type="STRING" id="10116.ENSRNOP00000018568"/>
<dbReference type="iPTMnet" id="Q5RJN9"/>
<dbReference type="PhosphoSitePlus" id="Q5RJN9"/>
<dbReference type="PaxDb" id="10116-ENSRNOP00000018568"/>
<dbReference type="Ensembl" id="ENSRNOT00000018568.6">
    <property type="protein sequence ID" value="ENSRNOP00000018568.3"/>
    <property type="gene ID" value="ENSRNOG00000013690.6"/>
</dbReference>
<dbReference type="GeneID" id="362793"/>
<dbReference type="KEGG" id="rno:362793"/>
<dbReference type="UCSC" id="RGD:1307315">
    <property type="organism name" value="rat"/>
</dbReference>
<dbReference type="AGR" id="RGD:1307315"/>
<dbReference type="CTD" id="122616"/>
<dbReference type="RGD" id="1307315">
    <property type="gene designation" value="Clba1"/>
</dbReference>
<dbReference type="eggNOG" id="ENOG502SPS5">
    <property type="taxonomic scope" value="Eukaryota"/>
</dbReference>
<dbReference type="GeneTree" id="ENSGT00940000154186"/>
<dbReference type="HOGENOM" id="CLU_071310_0_1_1"/>
<dbReference type="InParanoid" id="Q5RJN9"/>
<dbReference type="OMA" id="WSESHCQ"/>
<dbReference type="OrthoDB" id="24483at9989"/>
<dbReference type="PhylomeDB" id="Q5RJN9"/>
<dbReference type="TreeFam" id="TF335916"/>
<dbReference type="PRO" id="PR:Q5RJN9"/>
<dbReference type="Proteomes" id="UP000002494">
    <property type="component" value="Chromosome 6"/>
</dbReference>
<dbReference type="Bgee" id="ENSRNOG00000013690">
    <property type="expression patterns" value="Expressed in testis and 19 other cell types or tissues"/>
</dbReference>
<dbReference type="GO" id="GO:0030121">
    <property type="term" value="C:AP-1 adaptor complex"/>
    <property type="evidence" value="ECO:0000318"/>
    <property type="project" value="GO_Central"/>
</dbReference>
<dbReference type="GO" id="GO:0032588">
    <property type="term" value="C:trans-Golgi network membrane"/>
    <property type="evidence" value="ECO:0000318"/>
    <property type="project" value="GO_Central"/>
</dbReference>
<dbReference type="GO" id="GO:0030276">
    <property type="term" value="F:clathrin binding"/>
    <property type="evidence" value="ECO:0000318"/>
    <property type="project" value="GO_Central"/>
</dbReference>
<dbReference type="GO" id="GO:0046907">
    <property type="term" value="P:intracellular transport"/>
    <property type="evidence" value="ECO:0000318"/>
    <property type="project" value="GO_Central"/>
</dbReference>
<dbReference type="InterPro" id="IPR046359">
    <property type="entry name" value="Aftin-like"/>
</dbReference>
<dbReference type="InterPro" id="IPR029205">
    <property type="entry name" value="Clathrin-bd"/>
</dbReference>
<dbReference type="PANTHER" id="PTHR16156">
    <property type="entry name" value="AFTIPHILIN A-RELATED"/>
    <property type="match status" value="1"/>
</dbReference>
<dbReference type="PANTHER" id="PTHR16156:SF7">
    <property type="entry name" value="CLATHRIN BINDING BOX OF AFTIPHILIN CONTAINING 1"/>
    <property type="match status" value="1"/>
</dbReference>
<dbReference type="Pfam" id="PF15045">
    <property type="entry name" value="Clathrin_bdg"/>
    <property type="match status" value="1"/>
</dbReference>
<feature type="chain" id="PRO_0000274389" description="Uncharacterized protein CLBA1">
    <location>
        <begin position="1"/>
        <end position="321"/>
    </location>
</feature>
<feature type="region of interest" description="Disordered" evidence="1">
    <location>
        <begin position="1"/>
        <end position="85"/>
    </location>
</feature>
<feature type="compositionally biased region" description="Basic and acidic residues" evidence="1">
    <location>
        <begin position="1"/>
        <end position="12"/>
    </location>
</feature>
<feature type="compositionally biased region" description="Polar residues" evidence="1">
    <location>
        <begin position="53"/>
        <end position="67"/>
    </location>
</feature>
<sequence length="321" mass="34736">MQGGREVGRESVSDLAEELGEGSLHPTAGGQSGDSLERRRIGYDGPVILPDANANSSRLDEGLSSSRPHPGELGGGWGEFEGFQESSAKSEEFSQSFELLGRAAECQPLRTPSTPKEGGSCQVQQGGPWVTGTAAGPSSESILSYEKVFRLAFQEVPVEQATEDVCSLDRFLETGSEETAPVPRLCSESRKLWRALQNTDTVSASRCLWSESHCRENLFPVLGIDAAQKSLSGDQGHDLEGSDCRKPEDLLGVSGFHLHHCKALIQTKLSGTSGSRQGSLITYSLFLKTPLQGNGRYITIPQKKIFTPRNLKMAFFNNNVC</sequence>
<accession>Q5RJN9</accession>
<gene>
    <name evidence="3" type="primary">Clba1</name>
</gene>
<proteinExistence type="evidence at transcript level"/>